<feature type="chain" id="PRO_1000131140" description="UPF0246 protein YaaA">
    <location>
        <begin position="1"/>
        <end position="257"/>
    </location>
</feature>
<name>YAAA_SALHS</name>
<reference key="1">
    <citation type="journal article" date="2011" name="J. Bacteriol.">
        <title>Comparative genomics of 28 Salmonella enterica isolates: evidence for CRISPR-mediated adaptive sublineage evolution.</title>
        <authorList>
            <person name="Fricke W.F."/>
            <person name="Mammel M.K."/>
            <person name="McDermott P.F."/>
            <person name="Tartera C."/>
            <person name="White D.G."/>
            <person name="Leclerc J.E."/>
            <person name="Ravel J."/>
            <person name="Cebula T.A."/>
        </authorList>
    </citation>
    <scope>NUCLEOTIDE SEQUENCE [LARGE SCALE GENOMIC DNA]</scope>
    <source>
        <strain>SL476</strain>
    </source>
</reference>
<comment type="similarity">
    <text evidence="1">Belongs to the UPF0246 family.</text>
</comment>
<accession>B4TIA6</accession>
<protein>
    <recommendedName>
        <fullName evidence="1">UPF0246 protein YaaA</fullName>
    </recommendedName>
</protein>
<proteinExistence type="inferred from homology"/>
<organism>
    <name type="scientific">Salmonella heidelberg (strain SL476)</name>
    <dbReference type="NCBI Taxonomy" id="454169"/>
    <lineage>
        <taxon>Bacteria</taxon>
        <taxon>Pseudomonadati</taxon>
        <taxon>Pseudomonadota</taxon>
        <taxon>Gammaproteobacteria</taxon>
        <taxon>Enterobacterales</taxon>
        <taxon>Enterobacteriaceae</taxon>
        <taxon>Salmonella</taxon>
    </lineage>
</organism>
<sequence length="257" mass="29764">MLILISPAKTLDYQSPLATTRYTQPELLDHSQQLIQQARQLSAPQISRLMGISDKLADLNATRFHDWQPHFTPDNARQAILAFKGDVYTGLQAETFNDADFDFAQQHLRMLSGLYGVLRPLDLMQPYRLEMGIRLENPRGKDLYQFWGDIITDKLNEALEAQGDRVVVNLASEEYFKSVKPKKLNAELIKPVFLDEKNGKFKVVSFYAKKARGLMSRFIIENRLTKPEQLTAFDREGYFFDEETSTQDELVFKRYEQ</sequence>
<evidence type="ECO:0000255" key="1">
    <source>
        <dbReference type="HAMAP-Rule" id="MF_00652"/>
    </source>
</evidence>
<gene>
    <name evidence="1" type="primary">yaaA</name>
    <name type="ordered locus">SeHA_C0005</name>
</gene>
<dbReference type="EMBL" id="CP001120">
    <property type="protein sequence ID" value="ACF67852.1"/>
    <property type="molecule type" value="Genomic_DNA"/>
</dbReference>
<dbReference type="RefSeq" id="WP_000906175.1">
    <property type="nucleotide sequence ID" value="NC_011083.1"/>
</dbReference>
<dbReference type="SMR" id="B4TIA6"/>
<dbReference type="KEGG" id="seh:SeHA_C0005"/>
<dbReference type="HOGENOM" id="CLU_061989_0_0_6"/>
<dbReference type="Proteomes" id="UP000001866">
    <property type="component" value="Chromosome"/>
</dbReference>
<dbReference type="GO" id="GO:0005829">
    <property type="term" value="C:cytosol"/>
    <property type="evidence" value="ECO:0007669"/>
    <property type="project" value="TreeGrafter"/>
</dbReference>
<dbReference type="GO" id="GO:0033194">
    <property type="term" value="P:response to hydroperoxide"/>
    <property type="evidence" value="ECO:0007669"/>
    <property type="project" value="TreeGrafter"/>
</dbReference>
<dbReference type="HAMAP" id="MF_00652">
    <property type="entry name" value="UPF0246"/>
    <property type="match status" value="1"/>
</dbReference>
<dbReference type="InterPro" id="IPR005583">
    <property type="entry name" value="YaaA"/>
</dbReference>
<dbReference type="NCBIfam" id="NF002541">
    <property type="entry name" value="PRK02101.1-1"/>
    <property type="match status" value="1"/>
</dbReference>
<dbReference type="NCBIfam" id="NF002542">
    <property type="entry name" value="PRK02101.1-3"/>
    <property type="match status" value="1"/>
</dbReference>
<dbReference type="PANTHER" id="PTHR30283:SF4">
    <property type="entry name" value="PEROXIDE STRESS RESISTANCE PROTEIN YAAA"/>
    <property type="match status" value="1"/>
</dbReference>
<dbReference type="PANTHER" id="PTHR30283">
    <property type="entry name" value="PEROXIDE STRESS RESPONSE PROTEIN YAAA"/>
    <property type="match status" value="1"/>
</dbReference>
<dbReference type="Pfam" id="PF03883">
    <property type="entry name" value="H2O2_YaaD"/>
    <property type="match status" value="1"/>
</dbReference>